<name>A28_YLDV</name>
<protein>
    <recommendedName>
        <fullName>Envelope protein A28 homolog</fullName>
    </recommendedName>
    <alternativeName>
        <fullName>Protein 118</fullName>
    </alternativeName>
</protein>
<sequence length="139" mass="16135">MNPSSVFLIVVATVAICLIVIQVYYIYENYDNIKEFNSTHSLLEYSKTINVFSLDRRIYDPNDHVHDVKQKWRCVNYDNNYVSVSIFGFKSDSGKNIKNFSTVDDCIDYTFSKSTHSNIFNPCINEDKSKDCNFLKSVL</sequence>
<proteinExistence type="inferred from homology"/>
<reference key="1">
    <citation type="journal article" date="2001" name="Virology">
        <title>The genome sequence of Yaba-like disease virus, a yatapoxvirus.</title>
        <authorList>
            <person name="Lee H.-J."/>
            <person name="Essani K."/>
            <person name="Smith G.L."/>
        </authorList>
    </citation>
    <scope>NUCLEOTIDE SEQUENCE [LARGE SCALE GENOMIC DNA]</scope>
</reference>
<organismHost>
    <name type="scientific">Homo sapiens</name>
    <name type="common">Human</name>
    <dbReference type="NCBI Taxonomy" id="9606"/>
</organismHost>
<organismHost>
    <name type="scientific">Simiiformes</name>
    <dbReference type="NCBI Taxonomy" id="314293"/>
</organismHost>
<dbReference type="EMBL" id="AJ293568">
    <property type="protein sequence ID" value="CAC21356.1"/>
    <property type="molecule type" value="Genomic_DNA"/>
</dbReference>
<dbReference type="RefSeq" id="NP_073503.1">
    <property type="nucleotide sequence ID" value="NC_002642.1"/>
</dbReference>
<dbReference type="SMR" id="Q9DHJ5"/>
<dbReference type="GeneID" id="918608"/>
<dbReference type="KEGG" id="vg:918608"/>
<dbReference type="OrthoDB" id="17447at10239"/>
<dbReference type="Proteomes" id="UP000136581">
    <property type="component" value="Genome"/>
</dbReference>
<dbReference type="GO" id="GO:0016020">
    <property type="term" value="C:membrane"/>
    <property type="evidence" value="ECO:0007669"/>
    <property type="project" value="UniProtKB-KW"/>
</dbReference>
<dbReference type="GO" id="GO:0019031">
    <property type="term" value="C:viral envelope"/>
    <property type="evidence" value="ECO:0007669"/>
    <property type="project" value="UniProtKB-KW"/>
</dbReference>
<dbReference type="GO" id="GO:0055036">
    <property type="term" value="C:virion membrane"/>
    <property type="evidence" value="ECO:0007669"/>
    <property type="project" value="UniProtKB-SubCell"/>
</dbReference>
<dbReference type="GO" id="GO:0039663">
    <property type="term" value="P:membrane fusion involved in viral entry into host cell"/>
    <property type="evidence" value="ECO:0007669"/>
    <property type="project" value="UniProtKB-KW"/>
</dbReference>
<dbReference type="GO" id="GO:0046718">
    <property type="term" value="P:symbiont entry into host cell"/>
    <property type="evidence" value="ECO:0007669"/>
    <property type="project" value="UniProtKB-KW"/>
</dbReference>
<dbReference type="InterPro" id="IPR007664">
    <property type="entry name" value="Poxvirus_A28"/>
</dbReference>
<dbReference type="Pfam" id="PF04584">
    <property type="entry name" value="Pox_A28"/>
    <property type="match status" value="1"/>
</dbReference>
<organism>
    <name type="scientific">Yaba-like disease virus</name>
    <name type="common">YLDV</name>
    <dbReference type="NCBI Taxonomy" id="132475"/>
    <lineage>
        <taxon>Viruses</taxon>
        <taxon>Varidnaviria</taxon>
        <taxon>Bamfordvirae</taxon>
        <taxon>Nucleocytoviricota</taxon>
        <taxon>Pokkesviricetes</taxon>
        <taxon>Chitovirales</taxon>
        <taxon>Poxviridae</taxon>
        <taxon>Chordopoxvirinae</taxon>
        <taxon>Yatapoxvirus</taxon>
        <taxon>Tanapox virus</taxon>
    </lineage>
</organism>
<feature type="chain" id="PRO_0000099303" description="Envelope protein A28 homolog">
    <location>
        <begin position="1"/>
        <end position="139"/>
    </location>
</feature>
<feature type="transmembrane region" description="Helical; Signal-anchor for type II membrane protein" evidence="2">
    <location>
        <begin position="1"/>
        <end position="21"/>
    </location>
</feature>
<feature type="topological domain" description="Virion surface" evidence="2">
    <location>
        <begin position="22"/>
        <end position="139"/>
    </location>
</feature>
<evidence type="ECO:0000250" key="1"/>
<evidence type="ECO:0000255" key="2"/>
<evidence type="ECO:0000305" key="3"/>
<gene>
    <name type="ordered locus">118L</name>
</gene>
<keyword id="KW-1015">Disulfide bond</keyword>
<keyword id="KW-1168">Fusion of virus membrane with host membrane</keyword>
<keyword id="KW-0426">Late protein</keyword>
<keyword id="KW-0472">Membrane</keyword>
<keyword id="KW-0735">Signal-anchor</keyword>
<keyword id="KW-0812">Transmembrane</keyword>
<keyword id="KW-1133">Transmembrane helix</keyword>
<keyword id="KW-0261">Viral envelope protein</keyword>
<keyword id="KW-1162">Viral penetration into host cytoplasm</keyword>
<keyword id="KW-0946">Virion</keyword>
<keyword id="KW-1160">Virus entry into host cell</keyword>
<comment type="function">
    <text evidence="1">Envelope protein required for virus entry into host cell and for cell-cell fusion (syncytium formation).</text>
</comment>
<comment type="subcellular location">
    <subcellularLocation>
        <location evidence="3">Virion membrane</location>
        <topology evidence="3">Single-pass type II membrane protein</topology>
    </subcellularLocation>
    <text evidence="1">Component of the intracellular mature virion (IMV) membrane.</text>
</comment>
<comment type="PTM">
    <text evidence="1">Contains two intramolecular disulfide bonds. They are created by the viral disulfide bond formation pathway, a poxvirus-specific pathway that operates on the cytoplasmic side of the MV membranes (By similarity).</text>
</comment>
<comment type="similarity">
    <text evidence="3">Belongs to the poxviridae A28 protein family.</text>
</comment>
<accession>Q9DHJ5</accession>